<gene>
    <name evidence="1" type="primary">ureA</name>
    <name type="ordered locus">P9215_09231</name>
</gene>
<proteinExistence type="inferred from homology"/>
<name>URE3_PROM2</name>
<protein>
    <recommendedName>
        <fullName evidence="1">Urease subunit gamma</fullName>
        <ecNumber evidence="1">3.5.1.5</ecNumber>
    </recommendedName>
    <alternativeName>
        <fullName evidence="1">Urea amidohydrolase subunit gamma</fullName>
    </alternativeName>
</protein>
<keyword id="KW-0963">Cytoplasm</keyword>
<keyword id="KW-0378">Hydrolase</keyword>
<evidence type="ECO:0000255" key="1">
    <source>
        <dbReference type="HAMAP-Rule" id="MF_00739"/>
    </source>
</evidence>
<feature type="chain" id="PRO_1000062145" description="Urease subunit gamma">
    <location>
        <begin position="1"/>
        <end position="100"/>
    </location>
</feature>
<accession>A8G4K7</accession>
<comment type="catalytic activity">
    <reaction evidence="1">
        <text>urea + 2 H2O + H(+) = hydrogencarbonate + 2 NH4(+)</text>
        <dbReference type="Rhea" id="RHEA:20557"/>
        <dbReference type="ChEBI" id="CHEBI:15377"/>
        <dbReference type="ChEBI" id="CHEBI:15378"/>
        <dbReference type="ChEBI" id="CHEBI:16199"/>
        <dbReference type="ChEBI" id="CHEBI:17544"/>
        <dbReference type="ChEBI" id="CHEBI:28938"/>
        <dbReference type="EC" id="3.5.1.5"/>
    </reaction>
</comment>
<comment type="pathway">
    <text evidence="1">Nitrogen metabolism; urea degradation; CO(2) and NH(3) from urea (urease route): step 1/1.</text>
</comment>
<comment type="subunit">
    <text evidence="1">Heterotrimer of UreA (gamma), UreB (beta) and UreC (alpha) subunits. Three heterotrimers associate to form the active enzyme.</text>
</comment>
<comment type="subcellular location">
    <subcellularLocation>
        <location evidence="1">Cytoplasm</location>
    </subcellularLocation>
</comment>
<comment type="similarity">
    <text evidence="1">Belongs to the urease gamma subunit family.</text>
</comment>
<sequence length="100" mass="11184">MHLSPQEKDKLLIFSAALLAERRLDRGLKLNYPETIAFLSFQVLEGARDGKSVSQLMSEGTTWLTKSQVMEGIPEMVDEVQIEAVFPDGTKLVTIHNPIN</sequence>
<reference key="1">
    <citation type="journal article" date="2007" name="PLoS Genet.">
        <title>Patterns and implications of gene gain and loss in the evolution of Prochlorococcus.</title>
        <authorList>
            <person name="Kettler G.C."/>
            <person name="Martiny A.C."/>
            <person name="Huang K."/>
            <person name="Zucker J."/>
            <person name="Coleman M.L."/>
            <person name="Rodrigue S."/>
            <person name="Chen F."/>
            <person name="Lapidus A."/>
            <person name="Ferriera S."/>
            <person name="Johnson J."/>
            <person name="Steglich C."/>
            <person name="Church G.M."/>
            <person name="Richardson P."/>
            <person name="Chisholm S.W."/>
        </authorList>
    </citation>
    <scope>NUCLEOTIDE SEQUENCE [LARGE SCALE GENOMIC DNA]</scope>
    <source>
        <strain>MIT 9215</strain>
    </source>
</reference>
<organism>
    <name type="scientific">Prochlorococcus marinus (strain MIT 9215)</name>
    <dbReference type="NCBI Taxonomy" id="93060"/>
    <lineage>
        <taxon>Bacteria</taxon>
        <taxon>Bacillati</taxon>
        <taxon>Cyanobacteriota</taxon>
        <taxon>Cyanophyceae</taxon>
        <taxon>Synechococcales</taxon>
        <taxon>Prochlorococcaceae</taxon>
        <taxon>Prochlorococcus</taxon>
    </lineage>
</organism>
<dbReference type="EC" id="3.5.1.5" evidence="1"/>
<dbReference type="EMBL" id="CP000825">
    <property type="protein sequence ID" value="ABV50538.1"/>
    <property type="molecule type" value="Genomic_DNA"/>
</dbReference>
<dbReference type="RefSeq" id="WP_002807959.1">
    <property type="nucleotide sequence ID" value="NC_009840.1"/>
</dbReference>
<dbReference type="SMR" id="A8G4K7"/>
<dbReference type="STRING" id="93060.P9215_09231"/>
<dbReference type="KEGG" id="pmh:P9215_09231"/>
<dbReference type="eggNOG" id="COG0831">
    <property type="taxonomic scope" value="Bacteria"/>
</dbReference>
<dbReference type="HOGENOM" id="CLU_145825_1_0_3"/>
<dbReference type="OrthoDB" id="9793527at2"/>
<dbReference type="UniPathway" id="UPA00258">
    <property type="reaction ID" value="UER00370"/>
</dbReference>
<dbReference type="Proteomes" id="UP000002014">
    <property type="component" value="Chromosome"/>
</dbReference>
<dbReference type="GO" id="GO:0005737">
    <property type="term" value="C:cytoplasm"/>
    <property type="evidence" value="ECO:0007669"/>
    <property type="project" value="UniProtKB-SubCell"/>
</dbReference>
<dbReference type="GO" id="GO:0016151">
    <property type="term" value="F:nickel cation binding"/>
    <property type="evidence" value="ECO:0007669"/>
    <property type="project" value="InterPro"/>
</dbReference>
<dbReference type="GO" id="GO:0009039">
    <property type="term" value="F:urease activity"/>
    <property type="evidence" value="ECO:0007669"/>
    <property type="project" value="UniProtKB-UniRule"/>
</dbReference>
<dbReference type="GO" id="GO:0043419">
    <property type="term" value="P:urea catabolic process"/>
    <property type="evidence" value="ECO:0007669"/>
    <property type="project" value="UniProtKB-UniRule"/>
</dbReference>
<dbReference type="CDD" id="cd00390">
    <property type="entry name" value="Urease_gamma"/>
    <property type="match status" value="1"/>
</dbReference>
<dbReference type="Gene3D" id="3.30.280.10">
    <property type="entry name" value="Urease, gamma-like subunit"/>
    <property type="match status" value="1"/>
</dbReference>
<dbReference type="HAMAP" id="MF_00739">
    <property type="entry name" value="Urease_gamma"/>
    <property type="match status" value="1"/>
</dbReference>
<dbReference type="InterPro" id="IPR012010">
    <property type="entry name" value="Urease_gamma"/>
</dbReference>
<dbReference type="InterPro" id="IPR002026">
    <property type="entry name" value="Urease_gamma/gamma-beta_su"/>
</dbReference>
<dbReference type="InterPro" id="IPR036463">
    <property type="entry name" value="Urease_gamma_sf"/>
</dbReference>
<dbReference type="InterPro" id="IPR050069">
    <property type="entry name" value="Urease_subunit"/>
</dbReference>
<dbReference type="NCBIfam" id="NF009712">
    <property type="entry name" value="PRK13241.1"/>
    <property type="match status" value="1"/>
</dbReference>
<dbReference type="NCBIfam" id="TIGR00193">
    <property type="entry name" value="urease_gam"/>
    <property type="match status" value="1"/>
</dbReference>
<dbReference type="PANTHER" id="PTHR33569">
    <property type="entry name" value="UREASE"/>
    <property type="match status" value="1"/>
</dbReference>
<dbReference type="PANTHER" id="PTHR33569:SF1">
    <property type="entry name" value="UREASE"/>
    <property type="match status" value="1"/>
</dbReference>
<dbReference type="Pfam" id="PF00547">
    <property type="entry name" value="Urease_gamma"/>
    <property type="match status" value="1"/>
</dbReference>
<dbReference type="PIRSF" id="PIRSF001223">
    <property type="entry name" value="Urease_gamma"/>
    <property type="match status" value="1"/>
</dbReference>
<dbReference type="SUPFAM" id="SSF54111">
    <property type="entry name" value="Urease, gamma-subunit"/>
    <property type="match status" value="1"/>
</dbReference>